<feature type="chain" id="PRO_1000149359" description="3-isopropylmalate dehydratase large subunit">
    <location>
        <begin position="1"/>
        <end position="468"/>
    </location>
</feature>
<feature type="binding site" evidence="1">
    <location>
        <position position="346"/>
    </location>
    <ligand>
        <name>[4Fe-4S] cluster</name>
        <dbReference type="ChEBI" id="CHEBI:49883"/>
    </ligand>
</feature>
<feature type="binding site" evidence="1">
    <location>
        <position position="406"/>
    </location>
    <ligand>
        <name>[4Fe-4S] cluster</name>
        <dbReference type="ChEBI" id="CHEBI:49883"/>
    </ligand>
</feature>
<feature type="binding site" evidence="1">
    <location>
        <position position="409"/>
    </location>
    <ligand>
        <name>[4Fe-4S] cluster</name>
        <dbReference type="ChEBI" id="CHEBI:49883"/>
    </ligand>
</feature>
<accession>B8HLN1</accession>
<organism>
    <name type="scientific">Cyanothece sp. (strain PCC 7425 / ATCC 29141)</name>
    <dbReference type="NCBI Taxonomy" id="395961"/>
    <lineage>
        <taxon>Bacteria</taxon>
        <taxon>Bacillati</taxon>
        <taxon>Cyanobacteriota</taxon>
        <taxon>Cyanophyceae</taxon>
        <taxon>Gomontiellales</taxon>
        <taxon>Cyanothecaceae</taxon>
        <taxon>Cyanothece</taxon>
    </lineage>
</organism>
<protein>
    <recommendedName>
        <fullName evidence="1">3-isopropylmalate dehydratase large subunit</fullName>
        <ecNumber evidence="1">4.2.1.33</ecNumber>
    </recommendedName>
    <alternativeName>
        <fullName evidence="1">Alpha-IPM isomerase</fullName>
        <shortName evidence="1">IPMI</shortName>
    </alternativeName>
    <alternativeName>
        <fullName evidence="1">Isopropylmalate isomerase</fullName>
    </alternativeName>
</protein>
<reference key="1">
    <citation type="journal article" date="2011" name="MBio">
        <title>Novel metabolic attributes of the genus Cyanothece, comprising a group of unicellular nitrogen-fixing Cyanobacteria.</title>
        <authorList>
            <person name="Bandyopadhyay A."/>
            <person name="Elvitigala T."/>
            <person name="Welsh E."/>
            <person name="Stockel J."/>
            <person name="Liberton M."/>
            <person name="Min H."/>
            <person name="Sherman L.A."/>
            <person name="Pakrasi H.B."/>
        </authorList>
    </citation>
    <scope>NUCLEOTIDE SEQUENCE [LARGE SCALE GENOMIC DNA]</scope>
    <source>
        <strain>PCC 7425 / ATCC 29141</strain>
    </source>
</reference>
<proteinExistence type="inferred from homology"/>
<comment type="function">
    <text evidence="1">Catalyzes the isomerization between 2-isopropylmalate and 3-isopropylmalate, via the formation of 2-isopropylmaleate.</text>
</comment>
<comment type="catalytic activity">
    <reaction evidence="1">
        <text>(2R,3S)-3-isopropylmalate = (2S)-2-isopropylmalate</text>
        <dbReference type="Rhea" id="RHEA:32287"/>
        <dbReference type="ChEBI" id="CHEBI:1178"/>
        <dbReference type="ChEBI" id="CHEBI:35121"/>
        <dbReference type="EC" id="4.2.1.33"/>
    </reaction>
</comment>
<comment type="cofactor">
    <cofactor evidence="1">
        <name>[4Fe-4S] cluster</name>
        <dbReference type="ChEBI" id="CHEBI:49883"/>
    </cofactor>
    <text evidence="1">Binds 1 [4Fe-4S] cluster per subunit.</text>
</comment>
<comment type="pathway">
    <text evidence="1">Amino-acid biosynthesis; L-leucine biosynthesis; L-leucine from 3-methyl-2-oxobutanoate: step 2/4.</text>
</comment>
<comment type="subunit">
    <text evidence="1">Heterodimer of LeuC and LeuD.</text>
</comment>
<comment type="similarity">
    <text evidence="1">Belongs to the aconitase/IPM isomerase family. LeuC type 1 subfamily.</text>
</comment>
<evidence type="ECO:0000255" key="1">
    <source>
        <dbReference type="HAMAP-Rule" id="MF_01026"/>
    </source>
</evidence>
<dbReference type="EC" id="4.2.1.33" evidence="1"/>
<dbReference type="EMBL" id="CP001344">
    <property type="protein sequence ID" value="ACL43519.1"/>
    <property type="molecule type" value="Genomic_DNA"/>
</dbReference>
<dbReference type="SMR" id="B8HLN1"/>
<dbReference type="STRING" id="395961.Cyan7425_1136"/>
<dbReference type="KEGG" id="cyn:Cyan7425_1136"/>
<dbReference type="eggNOG" id="COG0065">
    <property type="taxonomic scope" value="Bacteria"/>
</dbReference>
<dbReference type="HOGENOM" id="CLU_006714_3_4_3"/>
<dbReference type="OrthoDB" id="9802769at2"/>
<dbReference type="UniPathway" id="UPA00048">
    <property type="reaction ID" value="UER00071"/>
</dbReference>
<dbReference type="GO" id="GO:0003861">
    <property type="term" value="F:3-isopropylmalate dehydratase activity"/>
    <property type="evidence" value="ECO:0007669"/>
    <property type="project" value="UniProtKB-UniRule"/>
</dbReference>
<dbReference type="GO" id="GO:0051539">
    <property type="term" value="F:4 iron, 4 sulfur cluster binding"/>
    <property type="evidence" value="ECO:0007669"/>
    <property type="project" value="UniProtKB-KW"/>
</dbReference>
<dbReference type="GO" id="GO:0046872">
    <property type="term" value="F:metal ion binding"/>
    <property type="evidence" value="ECO:0007669"/>
    <property type="project" value="UniProtKB-KW"/>
</dbReference>
<dbReference type="GO" id="GO:0009098">
    <property type="term" value="P:L-leucine biosynthetic process"/>
    <property type="evidence" value="ECO:0007669"/>
    <property type="project" value="UniProtKB-UniRule"/>
</dbReference>
<dbReference type="CDD" id="cd01583">
    <property type="entry name" value="IPMI"/>
    <property type="match status" value="1"/>
</dbReference>
<dbReference type="Gene3D" id="3.30.499.10">
    <property type="entry name" value="Aconitase, domain 3"/>
    <property type="match status" value="2"/>
</dbReference>
<dbReference type="HAMAP" id="MF_01026">
    <property type="entry name" value="LeuC_type1"/>
    <property type="match status" value="1"/>
</dbReference>
<dbReference type="InterPro" id="IPR004430">
    <property type="entry name" value="3-IsopropMal_deHydase_lsu"/>
</dbReference>
<dbReference type="InterPro" id="IPR015931">
    <property type="entry name" value="Acnase/IPM_dHydase_lsu_aba_1/3"/>
</dbReference>
<dbReference type="InterPro" id="IPR001030">
    <property type="entry name" value="Acoase/IPM_deHydtase_lsu_aba"/>
</dbReference>
<dbReference type="InterPro" id="IPR018136">
    <property type="entry name" value="Aconitase_4Fe-4S_BS"/>
</dbReference>
<dbReference type="InterPro" id="IPR036008">
    <property type="entry name" value="Aconitase_4Fe-4S_dom"/>
</dbReference>
<dbReference type="InterPro" id="IPR050067">
    <property type="entry name" value="IPM_dehydratase_rel_enz"/>
</dbReference>
<dbReference type="InterPro" id="IPR033941">
    <property type="entry name" value="IPMI_cat"/>
</dbReference>
<dbReference type="NCBIfam" id="TIGR00170">
    <property type="entry name" value="leuC"/>
    <property type="match status" value="1"/>
</dbReference>
<dbReference type="NCBIfam" id="NF004016">
    <property type="entry name" value="PRK05478.1"/>
    <property type="match status" value="1"/>
</dbReference>
<dbReference type="NCBIfam" id="NF009116">
    <property type="entry name" value="PRK12466.1"/>
    <property type="match status" value="1"/>
</dbReference>
<dbReference type="PANTHER" id="PTHR43822:SF9">
    <property type="entry name" value="3-ISOPROPYLMALATE DEHYDRATASE"/>
    <property type="match status" value="1"/>
</dbReference>
<dbReference type="PANTHER" id="PTHR43822">
    <property type="entry name" value="HOMOACONITASE, MITOCHONDRIAL-RELATED"/>
    <property type="match status" value="1"/>
</dbReference>
<dbReference type="Pfam" id="PF00330">
    <property type="entry name" value="Aconitase"/>
    <property type="match status" value="1"/>
</dbReference>
<dbReference type="PRINTS" id="PR00415">
    <property type="entry name" value="ACONITASE"/>
</dbReference>
<dbReference type="SUPFAM" id="SSF53732">
    <property type="entry name" value="Aconitase iron-sulfur domain"/>
    <property type="match status" value="1"/>
</dbReference>
<dbReference type="PROSITE" id="PS00450">
    <property type="entry name" value="ACONITASE_1"/>
    <property type="match status" value="1"/>
</dbReference>
<dbReference type="PROSITE" id="PS01244">
    <property type="entry name" value="ACONITASE_2"/>
    <property type="match status" value="1"/>
</dbReference>
<sequence>MSKGTLFDKVWDLHTVATLPSGQTQLFIGLHLIHEVTSPQAFAMLKERGLKVLFPERTIATVDHIVPTDNQARPFADSLAEEMMQALETNCQEHGIRFYNIGSGSQGIVHVIAPELGLTQPGMTIACGDSHTSTHGAFGAIAFGIGTSQVRDVLASQTLSLSKLKVRKIEVNGSLQPGVYAKDVILHIIRTLGVKAGVGYAYEYAGTTFEQMSMEERMTVCNMAIEGGARCGYVNPDAVTFAYLKEREFAPQTDWDTAQQWWQSIASDPDAVYDDVVVFDAADIAPTVTWGITPGQGIAVDQPLPLPEQLPASEQAIAEEAYQYMDLIPGQKLLGTKIDVCFIGSCTNGRISDLRAAAEIAQGRRVVPGLKAFVVPGSERVKQQAEAEGLDQIFQAAGFEWREPGCSMCLAMNPDKLQGRQISASSSNRNFKGRQGSATGRTLLMSPAMVAAAAVTGEVTDVRELLGQ</sequence>
<keyword id="KW-0004">4Fe-4S</keyword>
<keyword id="KW-0028">Amino-acid biosynthesis</keyword>
<keyword id="KW-0100">Branched-chain amino acid biosynthesis</keyword>
<keyword id="KW-0408">Iron</keyword>
<keyword id="KW-0411">Iron-sulfur</keyword>
<keyword id="KW-0432">Leucine biosynthesis</keyword>
<keyword id="KW-0456">Lyase</keyword>
<keyword id="KW-0479">Metal-binding</keyword>
<gene>
    <name evidence="1" type="primary">leuC</name>
    <name type="ordered locus">Cyan7425_1136</name>
</gene>
<name>LEUC_CYAP4</name>